<comment type="function">
    <text evidence="1">PPIases accelerate the folding of proteins. It catalyzes the cis-trans isomerization of proline imidic peptide bonds in oligopeptides (By similarity).</text>
</comment>
<comment type="catalytic activity">
    <reaction>
        <text>[protein]-peptidylproline (omega=180) = [protein]-peptidylproline (omega=0)</text>
        <dbReference type="Rhea" id="RHEA:16237"/>
        <dbReference type="Rhea" id="RHEA-COMP:10747"/>
        <dbReference type="Rhea" id="RHEA-COMP:10748"/>
        <dbReference type="ChEBI" id="CHEBI:83833"/>
        <dbReference type="ChEBI" id="CHEBI:83834"/>
        <dbReference type="EC" id="5.2.1.8"/>
    </reaction>
</comment>
<comment type="activity regulation">
    <text evidence="1">Inhibited by both FK506 and rapamycin.</text>
</comment>
<comment type="subcellular location">
    <subcellularLocation>
        <location evidence="4">Endoplasmic reticulum</location>
    </subcellularLocation>
</comment>
<comment type="similarity">
    <text evidence="5">Belongs to the FKBP-type PPIase family. FKBP2 subfamily.</text>
</comment>
<reference key="1">
    <citation type="submission" date="2005-09" db="EMBL/GenBank/DDBJ databases">
        <title>Rapamycin resistant mutations in fkbA encoding a FK506-binding protein of Aspergillus nidulans.</title>
        <authorList>
            <person name="Cha M.-J."/>
            <person name="Kwon N.-J."/>
            <person name="Chae S.-K."/>
        </authorList>
    </citation>
    <scope>NUCLEOTIDE SEQUENCE [GENOMIC DNA]</scope>
</reference>
<reference key="2">
    <citation type="journal article" date="2005" name="Nature">
        <title>Sequencing of Aspergillus nidulans and comparative analysis with A. fumigatus and A. oryzae.</title>
        <authorList>
            <person name="Galagan J.E."/>
            <person name="Calvo S.E."/>
            <person name="Cuomo C."/>
            <person name="Ma L.-J."/>
            <person name="Wortman J.R."/>
            <person name="Batzoglou S."/>
            <person name="Lee S.-I."/>
            <person name="Bastuerkmen M."/>
            <person name="Spevak C.C."/>
            <person name="Clutterbuck J."/>
            <person name="Kapitonov V."/>
            <person name="Jurka J."/>
            <person name="Scazzocchio C."/>
            <person name="Farman M.L."/>
            <person name="Butler J."/>
            <person name="Purcell S."/>
            <person name="Harris S."/>
            <person name="Braus G.H."/>
            <person name="Draht O."/>
            <person name="Busch S."/>
            <person name="D'Enfert C."/>
            <person name="Bouchier C."/>
            <person name="Goldman G.H."/>
            <person name="Bell-Pedersen D."/>
            <person name="Griffiths-Jones S."/>
            <person name="Doonan J.H."/>
            <person name="Yu J."/>
            <person name="Vienken K."/>
            <person name="Pain A."/>
            <person name="Freitag M."/>
            <person name="Selker E.U."/>
            <person name="Archer D.B."/>
            <person name="Penalva M.A."/>
            <person name="Oakley B.R."/>
            <person name="Momany M."/>
            <person name="Tanaka T."/>
            <person name="Kumagai T."/>
            <person name="Asai K."/>
            <person name="Machida M."/>
            <person name="Nierman W.C."/>
            <person name="Denning D.W."/>
            <person name="Caddick M.X."/>
            <person name="Hynes M."/>
            <person name="Paoletti M."/>
            <person name="Fischer R."/>
            <person name="Miller B.L."/>
            <person name="Dyer P.S."/>
            <person name="Sachs M.S."/>
            <person name="Osmani S.A."/>
            <person name="Birren B.W."/>
        </authorList>
    </citation>
    <scope>NUCLEOTIDE SEQUENCE [LARGE SCALE GENOMIC DNA]</scope>
    <source>
        <strain>FGSC A4 / ATCC 38163 / CBS 112.46 / NRRL 194 / M139</strain>
    </source>
</reference>
<reference key="3">
    <citation type="journal article" date="2009" name="Fungal Genet. Biol.">
        <title>The 2008 update of the Aspergillus nidulans genome annotation: a community effort.</title>
        <authorList>
            <person name="Wortman J.R."/>
            <person name="Gilsenan J.M."/>
            <person name="Joardar V."/>
            <person name="Deegan J."/>
            <person name="Clutterbuck J."/>
            <person name="Andersen M.R."/>
            <person name="Archer D."/>
            <person name="Bencina M."/>
            <person name="Braus G."/>
            <person name="Coutinho P."/>
            <person name="von Dohren H."/>
            <person name="Doonan J."/>
            <person name="Driessen A.J."/>
            <person name="Durek P."/>
            <person name="Espeso E."/>
            <person name="Fekete E."/>
            <person name="Flipphi M."/>
            <person name="Estrada C.G."/>
            <person name="Geysens S."/>
            <person name="Goldman G."/>
            <person name="de Groot P.W."/>
            <person name="Hansen K."/>
            <person name="Harris S.D."/>
            <person name="Heinekamp T."/>
            <person name="Helmstaedt K."/>
            <person name="Henrissat B."/>
            <person name="Hofmann G."/>
            <person name="Homan T."/>
            <person name="Horio T."/>
            <person name="Horiuchi H."/>
            <person name="James S."/>
            <person name="Jones M."/>
            <person name="Karaffa L."/>
            <person name="Karanyi Z."/>
            <person name="Kato M."/>
            <person name="Keller N."/>
            <person name="Kelly D.E."/>
            <person name="Kiel J.A."/>
            <person name="Kim J.M."/>
            <person name="van der Klei I.J."/>
            <person name="Klis F.M."/>
            <person name="Kovalchuk A."/>
            <person name="Krasevec N."/>
            <person name="Kubicek C.P."/>
            <person name="Liu B."/>
            <person name="Maccabe A."/>
            <person name="Meyer V."/>
            <person name="Mirabito P."/>
            <person name="Miskei M."/>
            <person name="Mos M."/>
            <person name="Mullins J."/>
            <person name="Nelson D.R."/>
            <person name="Nielsen J."/>
            <person name="Oakley B.R."/>
            <person name="Osmani S.A."/>
            <person name="Pakula T."/>
            <person name="Paszewski A."/>
            <person name="Paulsen I."/>
            <person name="Pilsyk S."/>
            <person name="Pocsi I."/>
            <person name="Punt P.J."/>
            <person name="Ram A.F."/>
            <person name="Ren Q."/>
            <person name="Robellet X."/>
            <person name="Robson G."/>
            <person name="Seiboth B."/>
            <person name="van Solingen P."/>
            <person name="Specht T."/>
            <person name="Sun J."/>
            <person name="Taheri-Talesh N."/>
            <person name="Takeshita N."/>
            <person name="Ussery D."/>
            <person name="vanKuyk P.A."/>
            <person name="Visser H."/>
            <person name="van de Vondervoort P.J."/>
            <person name="de Vries R.P."/>
            <person name="Walton J."/>
            <person name="Xiang X."/>
            <person name="Xiong Y."/>
            <person name="Zeng A.P."/>
            <person name="Brandt B.W."/>
            <person name="Cornell M.J."/>
            <person name="van den Hondel C.A."/>
            <person name="Visser J."/>
            <person name="Oliver S.G."/>
            <person name="Turner G."/>
        </authorList>
    </citation>
    <scope>GENOME REANNOTATION</scope>
    <source>
        <strain>FGSC A4 / ATCC 38163 / CBS 112.46 / NRRL 194 / M139</strain>
    </source>
</reference>
<protein>
    <recommendedName>
        <fullName>FK506-binding protein 2</fullName>
        <ecNumber>5.2.1.8</ecNumber>
    </recommendedName>
    <alternativeName>
        <fullName>Peptidyl-prolyl cis-trans isomerase</fullName>
        <shortName>PPIase</shortName>
    </alternativeName>
    <alternativeName>
        <fullName>Rotamase</fullName>
    </alternativeName>
</protein>
<proteinExistence type="inferred from homology"/>
<name>FKBP2_EMENI</name>
<gene>
    <name type="primary">fkbB</name>
    <name type="ORF">AN8343</name>
</gene>
<accession>Q5ATN7</accession>
<accession>C8VE36</accession>
<accession>Q3HV69</accession>
<evidence type="ECO:0000250" key="1"/>
<evidence type="ECO:0000255" key="2"/>
<evidence type="ECO:0000255" key="3">
    <source>
        <dbReference type="PROSITE-ProRule" id="PRU00277"/>
    </source>
</evidence>
<evidence type="ECO:0000255" key="4">
    <source>
        <dbReference type="PROSITE-ProRule" id="PRU10138"/>
    </source>
</evidence>
<evidence type="ECO:0000305" key="5"/>
<sequence length="135" mass="14572">MRVPIITTLLTLALTGLSQAASLGVETTHGVECNRKTTKGDTVKMHYRGTLAEDGSQFDASYDRGTPFKFKLGAGRVIKGWDEGLLDMCVGEKRTLTIPPEYGYGDRGIGPIPGGATLIFQTELLEIEGVPKDEL</sequence>
<organism>
    <name type="scientific">Emericella nidulans (strain FGSC A4 / ATCC 38163 / CBS 112.46 / NRRL 194 / M139)</name>
    <name type="common">Aspergillus nidulans</name>
    <dbReference type="NCBI Taxonomy" id="227321"/>
    <lineage>
        <taxon>Eukaryota</taxon>
        <taxon>Fungi</taxon>
        <taxon>Dikarya</taxon>
        <taxon>Ascomycota</taxon>
        <taxon>Pezizomycotina</taxon>
        <taxon>Eurotiomycetes</taxon>
        <taxon>Eurotiomycetidae</taxon>
        <taxon>Eurotiales</taxon>
        <taxon>Aspergillaceae</taxon>
        <taxon>Aspergillus</taxon>
        <taxon>Aspergillus subgen. Nidulantes</taxon>
    </lineage>
</organism>
<dbReference type="EC" id="5.2.1.8"/>
<dbReference type="EMBL" id="DQ192016">
    <property type="protein sequence ID" value="ABA39173.1"/>
    <property type="molecule type" value="Genomic_DNA"/>
</dbReference>
<dbReference type="EMBL" id="AACD01000151">
    <property type="protein sequence ID" value="EAA66905.1"/>
    <property type="molecule type" value="Genomic_DNA"/>
</dbReference>
<dbReference type="EMBL" id="BN001305">
    <property type="protein sequence ID" value="CBF80348.1"/>
    <property type="molecule type" value="Genomic_DNA"/>
</dbReference>
<dbReference type="RefSeq" id="XP_681612.1">
    <property type="nucleotide sequence ID" value="XM_676520.1"/>
</dbReference>
<dbReference type="SMR" id="Q5ATN7"/>
<dbReference type="FunCoup" id="Q5ATN7">
    <property type="interactions" value="541"/>
</dbReference>
<dbReference type="STRING" id="227321.Q5ATN7"/>
<dbReference type="EnsemblFungi" id="CBF80348">
    <property type="protein sequence ID" value="CBF80348"/>
    <property type="gene ID" value="ANIA_08343"/>
</dbReference>
<dbReference type="KEGG" id="ani:ANIA_08343"/>
<dbReference type="VEuPathDB" id="FungiDB:AN8343"/>
<dbReference type="eggNOG" id="KOG0549">
    <property type="taxonomic scope" value="Eukaryota"/>
</dbReference>
<dbReference type="HOGENOM" id="CLU_013615_8_1_1"/>
<dbReference type="InParanoid" id="Q5ATN7"/>
<dbReference type="OMA" id="VHMHYTG"/>
<dbReference type="OrthoDB" id="1902587at2759"/>
<dbReference type="Proteomes" id="UP000000560">
    <property type="component" value="Chromosome V"/>
</dbReference>
<dbReference type="GO" id="GO:0005783">
    <property type="term" value="C:endoplasmic reticulum"/>
    <property type="evidence" value="ECO:0000318"/>
    <property type="project" value="GO_Central"/>
</dbReference>
<dbReference type="GO" id="GO:0003755">
    <property type="term" value="F:peptidyl-prolyl cis-trans isomerase activity"/>
    <property type="evidence" value="ECO:0000318"/>
    <property type="project" value="GO_Central"/>
</dbReference>
<dbReference type="GO" id="GO:0097308">
    <property type="term" value="P:cellular response to farnesol"/>
    <property type="evidence" value="ECO:0000270"/>
    <property type="project" value="AspGD"/>
</dbReference>
<dbReference type="GO" id="GO:0061077">
    <property type="term" value="P:chaperone-mediated protein folding"/>
    <property type="evidence" value="ECO:0007669"/>
    <property type="project" value="InterPro"/>
</dbReference>
<dbReference type="FunFam" id="3.10.50.40:FF:000006">
    <property type="entry name" value="Peptidyl-prolyl cis-trans isomerase"/>
    <property type="match status" value="1"/>
</dbReference>
<dbReference type="Gene3D" id="3.10.50.40">
    <property type="match status" value="1"/>
</dbReference>
<dbReference type="InterPro" id="IPR044609">
    <property type="entry name" value="FKBP2/11"/>
</dbReference>
<dbReference type="InterPro" id="IPR046357">
    <property type="entry name" value="PPIase_dom_sf"/>
</dbReference>
<dbReference type="InterPro" id="IPR001179">
    <property type="entry name" value="PPIase_FKBP_dom"/>
</dbReference>
<dbReference type="PANTHER" id="PTHR45779">
    <property type="entry name" value="PEPTIDYLPROLYL ISOMERASE"/>
    <property type="match status" value="1"/>
</dbReference>
<dbReference type="PANTHER" id="PTHR45779:SF7">
    <property type="entry name" value="PEPTIDYLPROLYL ISOMERASE"/>
    <property type="match status" value="1"/>
</dbReference>
<dbReference type="Pfam" id="PF00254">
    <property type="entry name" value="FKBP_C"/>
    <property type="match status" value="1"/>
</dbReference>
<dbReference type="SUPFAM" id="SSF54534">
    <property type="entry name" value="FKBP-like"/>
    <property type="match status" value="1"/>
</dbReference>
<dbReference type="PROSITE" id="PS00014">
    <property type="entry name" value="ER_TARGET"/>
    <property type="match status" value="1"/>
</dbReference>
<dbReference type="PROSITE" id="PS50059">
    <property type="entry name" value="FKBP_PPIASE"/>
    <property type="match status" value="1"/>
</dbReference>
<keyword id="KW-0256">Endoplasmic reticulum</keyword>
<keyword id="KW-0413">Isomerase</keyword>
<keyword id="KW-1185">Reference proteome</keyword>
<keyword id="KW-0697">Rotamase</keyword>
<keyword id="KW-0732">Signal</keyword>
<feature type="signal peptide" evidence="2">
    <location>
        <begin position="1"/>
        <end position="20"/>
    </location>
</feature>
<feature type="chain" id="PRO_0000233068" description="FK506-binding protein 2">
    <location>
        <begin position="21"/>
        <end position="135"/>
    </location>
</feature>
<feature type="domain" description="PPIase FKBP-type" evidence="3">
    <location>
        <begin position="40"/>
        <end position="128"/>
    </location>
</feature>
<feature type="short sequence motif" description="Prevents secretion from ER" evidence="4">
    <location>
        <begin position="132"/>
        <end position="135"/>
    </location>
</feature>